<dbReference type="EC" id="3.5.1.18" evidence="1"/>
<dbReference type="EMBL" id="CP000308">
    <property type="protein sequence ID" value="ABG14209.1"/>
    <property type="molecule type" value="Genomic_DNA"/>
</dbReference>
<dbReference type="RefSeq" id="WP_002208549.1">
    <property type="nucleotide sequence ID" value="NZ_CP009906.1"/>
</dbReference>
<dbReference type="SMR" id="Q1C5R3"/>
<dbReference type="GeneID" id="57975649"/>
<dbReference type="KEGG" id="ypa:YPA_2244"/>
<dbReference type="UniPathway" id="UPA00034">
    <property type="reaction ID" value="UER00021"/>
</dbReference>
<dbReference type="Proteomes" id="UP000001971">
    <property type="component" value="Chromosome"/>
</dbReference>
<dbReference type="GO" id="GO:0008777">
    <property type="term" value="F:acetylornithine deacetylase activity"/>
    <property type="evidence" value="ECO:0007669"/>
    <property type="project" value="TreeGrafter"/>
</dbReference>
<dbReference type="GO" id="GO:0050897">
    <property type="term" value="F:cobalt ion binding"/>
    <property type="evidence" value="ECO:0007669"/>
    <property type="project" value="UniProtKB-UniRule"/>
</dbReference>
<dbReference type="GO" id="GO:0009014">
    <property type="term" value="F:succinyl-diaminopimelate desuccinylase activity"/>
    <property type="evidence" value="ECO:0007669"/>
    <property type="project" value="UniProtKB-UniRule"/>
</dbReference>
<dbReference type="GO" id="GO:0008270">
    <property type="term" value="F:zinc ion binding"/>
    <property type="evidence" value="ECO:0007669"/>
    <property type="project" value="UniProtKB-UniRule"/>
</dbReference>
<dbReference type="GO" id="GO:0019877">
    <property type="term" value="P:diaminopimelate biosynthetic process"/>
    <property type="evidence" value="ECO:0007669"/>
    <property type="project" value="UniProtKB-UniRule"/>
</dbReference>
<dbReference type="GO" id="GO:0006526">
    <property type="term" value="P:L-arginine biosynthetic process"/>
    <property type="evidence" value="ECO:0007669"/>
    <property type="project" value="TreeGrafter"/>
</dbReference>
<dbReference type="GO" id="GO:0009089">
    <property type="term" value="P:lysine biosynthetic process via diaminopimelate"/>
    <property type="evidence" value="ECO:0007669"/>
    <property type="project" value="UniProtKB-UniRule"/>
</dbReference>
<dbReference type="CDD" id="cd03891">
    <property type="entry name" value="M20_DapE_proteobac"/>
    <property type="match status" value="1"/>
</dbReference>
<dbReference type="FunFam" id="3.30.70.360:FF:000011">
    <property type="entry name" value="Succinyl-diaminopimelate desuccinylase"/>
    <property type="match status" value="1"/>
</dbReference>
<dbReference type="FunFam" id="3.40.630.10:FF:000005">
    <property type="entry name" value="Succinyl-diaminopimelate desuccinylase"/>
    <property type="match status" value="1"/>
</dbReference>
<dbReference type="FunFam" id="3.40.630.10:FF:000010">
    <property type="entry name" value="Succinyl-diaminopimelate desuccinylase"/>
    <property type="match status" value="1"/>
</dbReference>
<dbReference type="Gene3D" id="3.40.630.10">
    <property type="entry name" value="Zn peptidases"/>
    <property type="match status" value="2"/>
</dbReference>
<dbReference type="HAMAP" id="MF_01690">
    <property type="entry name" value="DapE"/>
    <property type="match status" value="1"/>
</dbReference>
<dbReference type="InterPro" id="IPR001261">
    <property type="entry name" value="ArgE/DapE_CS"/>
</dbReference>
<dbReference type="InterPro" id="IPR036264">
    <property type="entry name" value="Bact_exopeptidase_dim_dom"/>
</dbReference>
<dbReference type="InterPro" id="IPR005941">
    <property type="entry name" value="DapE_proteobac"/>
</dbReference>
<dbReference type="InterPro" id="IPR002933">
    <property type="entry name" value="Peptidase_M20"/>
</dbReference>
<dbReference type="InterPro" id="IPR011650">
    <property type="entry name" value="Peptidase_M20_dimer"/>
</dbReference>
<dbReference type="InterPro" id="IPR050072">
    <property type="entry name" value="Peptidase_M20A"/>
</dbReference>
<dbReference type="NCBIfam" id="TIGR01246">
    <property type="entry name" value="dapE_proteo"/>
    <property type="match status" value="1"/>
</dbReference>
<dbReference type="NCBIfam" id="NF009557">
    <property type="entry name" value="PRK13009.1"/>
    <property type="match status" value="1"/>
</dbReference>
<dbReference type="PANTHER" id="PTHR43808">
    <property type="entry name" value="ACETYLORNITHINE DEACETYLASE"/>
    <property type="match status" value="1"/>
</dbReference>
<dbReference type="PANTHER" id="PTHR43808:SF31">
    <property type="entry name" value="N-ACETYL-L-CITRULLINE DEACETYLASE"/>
    <property type="match status" value="1"/>
</dbReference>
<dbReference type="Pfam" id="PF07687">
    <property type="entry name" value="M20_dimer"/>
    <property type="match status" value="1"/>
</dbReference>
<dbReference type="Pfam" id="PF01546">
    <property type="entry name" value="Peptidase_M20"/>
    <property type="match status" value="1"/>
</dbReference>
<dbReference type="SUPFAM" id="SSF55031">
    <property type="entry name" value="Bacterial exopeptidase dimerisation domain"/>
    <property type="match status" value="1"/>
</dbReference>
<dbReference type="SUPFAM" id="SSF53187">
    <property type="entry name" value="Zn-dependent exopeptidases"/>
    <property type="match status" value="1"/>
</dbReference>
<dbReference type="PROSITE" id="PS00758">
    <property type="entry name" value="ARGE_DAPE_CPG2_1"/>
    <property type="match status" value="1"/>
</dbReference>
<proteinExistence type="inferred from homology"/>
<keyword id="KW-0028">Amino-acid biosynthesis</keyword>
<keyword id="KW-0170">Cobalt</keyword>
<keyword id="KW-0220">Diaminopimelate biosynthesis</keyword>
<keyword id="KW-0378">Hydrolase</keyword>
<keyword id="KW-0457">Lysine biosynthesis</keyword>
<keyword id="KW-0479">Metal-binding</keyword>
<keyword id="KW-0862">Zinc</keyword>
<feature type="chain" id="PRO_0000375797" description="Succinyl-diaminopimelate desuccinylase">
    <location>
        <begin position="1"/>
        <end position="375"/>
    </location>
</feature>
<feature type="active site" evidence="1">
    <location>
        <position position="68"/>
    </location>
</feature>
<feature type="active site" description="Proton acceptor" evidence="1">
    <location>
        <position position="133"/>
    </location>
</feature>
<feature type="binding site" evidence="1">
    <location>
        <position position="66"/>
    </location>
    <ligand>
        <name>Zn(2+)</name>
        <dbReference type="ChEBI" id="CHEBI:29105"/>
        <label>1</label>
    </ligand>
</feature>
<feature type="binding site" evidence="1">
    <location>
        <position position="99"/>
    </location>
    <ligand>
        <name>Zn(2+)</name>
        <dbReference type="ChEBI" id="CHEBI:29105"/>
        <label>1</label>
    </ligand>
</feature>
<feature type="binding site" evidence="1">
    <location>
        <position position="99"/>
    </location>
    <ligand>
        <name>Zn(2+)</name>
        <dbReference type="ChEBI" id="CHEBI:29105"/>
        <label>2</label>
    </ligand>
</feature>
<feature type="binding site" evidence="1">
    <location>
        <position position="134"/>
    </location>
    <ligand>
        <name>Zn(2+)</name>
        <dbReference type="ChEBI" id="CHEBI:29105"/>
        <label>2</label>
    </ligand>
</feature>
<feature type="binding site" evidence="1">
    <location>
        <position position="162"/>
    </location>
    <ligand>
        <name>Zn(2+)</name>
        <dbReference type="ChEBI" id="CHEBI:29105"/>
        <label>1</label>
    </ligand>
</feature>
<feature type="binding site" evidence="1">
    <location>
        <position position="348"/>
    </location>
    <ligand>
        <name>Zn(2+)</name>
        <dbReference type="ChEBI" id="CHEBI:29105"/>
        <label>2</label>
    </ligand>
</feature>
<sequence>MICPVIELAQQLIKRPSLSPSDAGCQEIMIQRLAAIGFTIEPMNFGDTLNFWAWRGEGETLAFAGHTDVVPTGDESHWHSPPFEPTIRDGMLYGRGAADMKGSLAAMIVAAERFVAAHPDHKGRLAFMITSDEEAKATNGTVKVVEALMARHERLDYCLVGEPSSTDRVGDIVKNGRRGSITANLRIHGVQGHVAYPHLADNPVHRAMPALNELVATQWDEGNAFFPATSMQIANLQAGTGSNNVIPGEFYVQFNFRFSTELTDSLIKQRVAALLDRHQLDYTLEWVLSGQPFLTAKGALVDAVVNAVKHYTEITPQLLTTGGTSDGRFIALMGAQVVELGPVNATIHKVNECVSAADLQLLSRMYQKIMEQLIA</sequence>
<gene>
    <name evidence="1" type="primary">dapE</name>
    <name type="ordered locus">YPA_2244</name>
</gene>
<evidence type="ECO:0000255" key="1">
    <source>
        <dbReference type="HAMAP-Rule" id="MF_01690"/>
    </source>
</evidence>
<accession>Q1C5R3</accession>
<comment type="function">
    <text evidence="1">Catalyzes the hydrolysis of N-succinyl-L,L-diaminopimelic acid (SDAP), forming succinate and LL-2,6-diaminopimelate (DAP), an intermediate involved in the bacterial biosynthesis of lysine and meso-diaminopimelic acid, an essential component of bacterial cell walls.</text>
</comment>
<comment type="catalytic activity">
    <reaction evidence="1">
        <text>N-succinyl-(2S,6S)-2,6-diaminopimelate + H2O = (2S,6S)-2,6-diaminopimelate + succinate</text>
        <dbReference type="Rhea" id="RHEA:22608"/>
        <dbReference type="ChEBI" id="CHEBI:15377"/>
        <dbReference type="ChEBI" id="CHEBI:30031"/>
        <dbReference type="ChEBI" id="CHEBI:57609"/>
        <dbReference type="ChEBI" id="CHEBI:58087"/>
        <dbReference type="EC" id="3.5.1.18"/>
    </reaction>
</comment>
<comment type="cofactor">
    <cofactor evidence="1">
        <name>Zn(2+)</name>
        <dbReference type="ChEBI" id="CHEBI:29105"/>
    </cofactor>
    <cofactor evidence="1">
        <name>Co(2+)</name>
        <dbReference type="ChEBI" id="CHEBI:48828"/>
    </cofactor>
    <text evidence="1">Binds 2 Zn(2+) or Co(2+) ions per subunit.</text>
</comment>
<comment type="pathway">
    <text evidence="1">Amino-acid biosynthesis; L-lysine biosynthesis via DAP pathway; LL-2,6-diaminopimelate from (S)-tetrahydrodipicolinate (succinylase route): step 3/3.</text>
</comment>
<comment type="subunit">
    <text evidence="1">Homodimer.</text>
</comment>
<comment type="similarity">
    <text evidence="1">Belongs to the peptidase M20A family. DapE subfamily.</text>
</comment>
<name>DAPE_YERPA</name>
<reference key="1">
    <citation type="journal article" date="2006" name="J. Bacteriol.">
        <title>Complete genome sequence of Yersinia pestis strains Antiqua and Nepal516: evidence of gene reduction in an emerging pathogen.</title>
        <authorList>
            <person name="Chain P.S.G."/>
            <person name="Hu P."/>
            <person name="Malfatti S.A."/>
            <person name="Radnedge L."/>
            <person name="Larimer F."/>
            <person name="Vergez L.M."/>
            <person name="Worsham P."/>
            <person name="Chu M.C."/>
            <person name="Andersen G.L."/>
        </authorList>
    </citation>
    <scope>NUCLEOTIDE SEQUENCE [LARGE SCALE GENOMIC DNA]</scope>
    <source>
        <strain>Antiqua</strain>
    </source>
</reference>
<organism>
    <name type="scientific">Yersinia pestis bv. Antiqua (strain Antiqua)</name>
    <dbReference type="NCBI Taxonomy" id="360102"/>
    <lineage>
        <taxon>Bacteria</taxon>
        <taxon>Pseudomonadati</taxon>
        <taxon>Pseudomonadota</taxon>
        <taxon>Gammaproteobacteria</taxon>
        <taxon>Enterobacterales</taxon>
        <taxon>Yersiniaceae</taxon>
        <taxon>Yersinia</taxon>
    </lineage>
</organism>
<protein>
    <recommendedName>
        <fullName evidence="1">Succinyl-diaminopimelate desuccinylase</fullName>
        <shortName evidence="1">SDAP desuccinylase</shortName>
        <ecNumber evidence="1">3.5.1.18</ecNumber>
    </recommendedName>
    <alternativeName>
        <fullName evidence="1">N-succinyl-LL-2,6-diaminoheptanedioate amidohydrolase</fullName>
    </alternativeName>
</protein>